<dbReference type="EC" id="2.5.1.7" evidence="1"/>
<dbReference type="EMBL" id="BX897700">
    <property type="protein sequence ID" value="CAF26599.1"/>
    <property type="molecule type" value="Genomic_DNA"/>
</dbReference>
<dbReference type="RefSeq" id="WP_011179784.1">
    <property type="nucleotide sequence ID" value="NC_005955.1"/>
</dbReference>
<dbReference type="SMR" id="Q6FYT1"/>
<dbReference type="KEGG" id="bqu:BQ11390"/>
<dbReference type="eggNOG" id="COG0766">
    <property type="taxonomic scope" value="Bacteria"/>
</dbReference>
<dbReference type="HOGENOM" id="CLU_027387_0_0_5"/>
<dbReference type="OrthoDB" id="9803760at2"/>
<dbReference type="UniPathway" id="UPA00219"/>
<dbReference type="Proteomes" id="UP000000597">
    <property type="component" value="Chromosome"/>
</dbReference>
<dbReference type="GO" id="GO:0005737">
    <property type="term" value="C:cytoplasm"/>
    <property type="evidence" value="ECO:0007669"/>
    <property type="project" value="UniProtKB-SubCell"/>
</dbReference>
<dbReference type="GO" id="GO:0008760">
    <property type="term" value="F:UDP-N-acetylglucosamine 1-carboxyvinyltransferase activity"/>
    <property type="evidence" value="ECO:0007669"/>
    <property type="project" value="UniProtKB-UniRule"/>
</dbReference>
<dbReference type="GO" id="GO:0051301">
    <property type="term" value="P:cell division"/>
    <property type="evidence" value="ECO:0007669"/>
    <property type="project" value="UniProtKB-KW"/>
</dbReference>
<dbReference type="GO" id="GO:0071555">
    <property type="term" value="P:cell wall organization"/>
    <property type="evidence" value="ECO:0007669"/>
    <property type="project" value="UniProtKB-KW"/>
</dbReference>
<dbReference type="GO" id="GO:0009252">
    <property type="term" value="P:peptidoglycan biosynthetic process"/>
    <property type="evidence" value="ECO:0007669"/>
    <property type="project" value="UniProtKB-UniRule"/>
</dbReference>
<dbReference type="GO" id="GO:0008360">
    <property type="term" value="P:regulation of cell shape"/>
    <property type="evidence" value="ECO:0007669"/>
    <property type="project" value="UniProtKB-KW"/>
</dbReference>
<dbReference type="GO" id="GO:0019277">
    <property type="term" value="P:UDP-N-acetylgalactosamine biosynthetic process"/>
    <property type="evidence" value="ECO:0007669"/>
    <property type="project" value="InterPro"/>
</dbReference>
<dbReference type="CDD" id="cd01555">
    <property type="entry name" value="UdpNAET"/>
    <property type="match status" value="1"/>
</dbReference>
<dbReference type="FunFam" id="3.65.10.10:FF:000001">
    <property type="entry name" value="UDP-N-acetylglucosamine 1-carboxyvinyltransferase"/>
    <property type="match status" value="1"/>
</dbReference>
<dbReference type="Gene3D" id="3.65.10.10">
    <property type="entry name" value="Enolpyruvate transferase domain"/>
    <property type="match status" value="2"/>
</dbReference>
<dbReference type="HAMAP" id="MF_00111">
    <property type="entry name" value="MurA"/>
    <property type="match status" value="1"/>
</dbReference>
<dbReference type="InterPro" id="IPR001986">
    <property type="entry name" value="Enolpyruvate_Tfrase_dom"/>
</dbReference>
<dbReference type="InterPro" id="IPR036968">
    <property type="entry name" value="Enolpyruvate_Tfrase_sf"/>
</dbReference>
<dbReference type="InterPro" id="IPR050068">
    <property type="entry name" value="MurA_subfamily"/>
</dbReference>
<dbReference type="InterPro" id="IPR013792">
    <property type="entry name" value="RNA3'P_cycl/enolpyr_Trfase_a/b"/>
</dbReference>
<dbReference type="InterPro" id="IPR005750">
    <property type="entry name" value="UDP_GlcNAc_COvinyl_MurA"/>
</dbReference>
<dbReference type="NCBIfam" id="TIGR01072">
    <property type="entry name" value="murA"/>
    <property type="match status" value="1"/>
</dbReference>
<dbReference type="NCBIfam" id="NF006873">
    <property type="entry name" value="PRK09369.1"/>
    <property type="match status" value="1"/>
</dbReference>
<dbReference type="PANTHER" id="PTHR43783">
    <property type="entry name" value="UDP-N-ACETYLGLUCOSAMINE 1-CARBOXYVINYLTRANSFERASE"/>
    <property type="match status" value="1"/>
</dbReference>
<dbReference type="PANTHER" id="PTHR43783:SF1">
    <property type="entry name" value="UDP-N-ACETYLGLUCOSAMINE 1-CARBOXYVINYLTRANSFERASE"/>
    <property type="match status" value="1"/>
</dbReference>
<dbReference type="Pfam" id="PF00275">
    <property type="entry name" value="EPSP_synthase"/>
    <property type="match status" value="1"/>
</dbReference>
<dbReference type="SUPFAM" id="SSF55205">
    <property type="entry name" value="EPT/RTPC-like"/>
    <property type="match status" value="1"/>
</dbReference>
<proteinExistence type="inferred from homology"/>
<gene>
    <name evidence="1" type="primary">murA</name>
    <name type="ordered locus">BQ11390</name>
</gene>
<name>MURA_BARQU</name>
<evidence type="ECO:0000255" key="1">
    <source>
        <dbReference type="HAMAP-Rule" id="MF_00111"/>
    </source>
</evidence>
<feature type="chain" id="PRO_0000231170" description="UDP-N-acetylglucosamine 1-carboxyvinyltransferase">
    <location>
        <begin position="1"/>
        <end position="431"/>
    </location>
</feature>
<feature type="active site" description="Proton donor" evidence="1">
    <location>
        <position position="126"/>
    </location>
</feature>
<feature type="binding site" evidence="1">
    <location>
        <begin position="22"/>
        <end position="23"/>
    </location>
    <ligand>
        <name>phosphoenolpyruvate</name>
        <dbReference type="ChEBI" id="CHEBI:58702"/>
    </ligand>
</feature>
<feature type="binding site" evidence="1">
    <location>
        <position position="102"/>
    </location>
    <ligand>
        <name>UDP-N-acetyl-alpha-D-glucosamine</name>
        <dbReference type="ChEBI" id="CHEBI:57705"/>
    </ligand>
</feature>
<feature type="binding site" evidence="1">
    <location>
        <position position="318"/>
    </location>
    <ligand>
        <name>UDP-N-acetyl-alpha-D-glucosamine</name>
        <dbReference type="ChEBI" id="CHEBI:57705"/>
    </ligand>
</feature>
<feature type="binding site" evidence="1">
    <location>
        <position position="340"/>
    </location>
    <ligand>
        <name>UDP-N-acetyl-alpha-D-glucosamine</name>
        <dbReference type="ChEBI" id="CHEBI:57705"/>
    </ligand>
</feature>
<feature type="modified residue" description="2-(S-cysteinyl)pyruvic acid O-phosphothioketal" evidence="1">
    <location>
        <position position="126"/>
    </location>
</feature>
<sequence length="431" mass="46524">MDSIQIVGGKKLKGTIPISGAKNAALPLMIAALLTEETVTLDNIPHLADVELLIRILNNHGVGYAVDGQKSHHDCIDSRTIHFTAQKITTTYAPYELVRKMRASFWVIGPLLARCHEAYVSLPGGCAIGTRPVNFILEGLKTLGARIAIENGYVHAKAPKGLKGAHYHFPKVTVGGTHVMLMAAATANGTTLLENAACEPEVTNLIQALNAMGAKITGEGTSTLTIEGVKKLHGARISVIADRIEAGTYAMVVAMTGGNVLLKNANPHHLTQVLEVLQKTGLDIEIKPQGLHLKRNPRQTKIMPVNIKTGPYPAFPTDLQAQFMALMTRAQGTACITETIFENRFMHVQELTRLGAQIKLDGQTATVYGREHLQGAPVMATDLRASVSLVIAALAAKGESVINRVYHLDRGFERLEEKLARCGAIIQRITV</sequence>
<keyword id="KW-0131">Cell cycle</keyword>
<keyword id="KW-0132">Cell division</keyword>
<keyword id="KW-0133">Cell shape</keyword>
<keyword id="KW-0961">Cell wall biogenesis/degradation</keyword>
<keyword id="KW-0963">Cytoplasm</keyword>
<keyword id="KW-0573">Peptidoglycan synthesis</keyword>
<keyword id="KW-0670">Pyruvate</keyword>
<keyword id="KW-0808">Transferase</keyword>
<accession>Q6FYT1</accession>
<protein>
    <recommendedName>
        <fullName evidence="1">UDP-N-acetylglucosamine 1-carboxyvinyltransferase</fullName>
        <ecNumber evidence="1">2.5.1.7</ecNumber>
    </recommendedName>
    <alternativeName>
        <fullName evidence="1">Enoylpyruvate transferase</fullName>
    </alternativeName>
    <alternativeName>
        <fullName evidence="1">UDP-N-acetylglucosamine enolpyruvyl transferase</fullName>
        <shortName evidence="1">EPT</shortName>
    </alternativeName>
</protein>
<organism>
    <name type="scientific">Bartonella quintana (strain Toulouse)</name>
    <name type="common">Rochalimaea quintana</name>
    <dbReference type="NCBI Taxonomy" id="283165"/>
    <lineage>
        <taxon>Bacteria</taxon>
        <taxon>Pseudomonadati</taxon>
        <taxon>Pseudomonadota</taxon>
        <taxon>Alphaproteobacteria</taxon>
        <taxon>Hyphomicrobiales</taxon>
        <taxon>Bartonellaceae</taxon>
        <taxon>Bartonella</taxon>
    </lineage>
</organism>
<reference key="1">
    <citation type="journal article" date="2004" name="Proc. Natl. Acad. Sci. U.S.A.">
        <title>The louse-borne human pathogen Bartonella quintana is a genomic derivative of the zoonotic agent Bartonella henselae.</title>
        <authorList>
            <person name="Alsmark U.C.M."/>
            <person name="Frank A.C."/>
            <person name="Karlberg E.O."/>
            <person name="Legault B.-A."/>
            <person name="Ardell D.H."/>
            <person name="Canbaeck B."/>
            <person name="Eriksson A.-S."/>
            <person name="Naeslund A.K."/>
            <person name="Handley S.A."/>
            <person name="Huvet M."/>
            <person name="La Scola B."/>
            <person name="Holmberg M."/>
            <person name="Andersson S.G.E."/>
        </authorList>
    </citation>
    <scope>NUCLEOTIDE SEQUENCE [LARGE SCALE GENOMIC DNA]</scope>
    <source>
        <strain>Toulouse</strain>
    </source>
</reference>
<comment type="function">
    <text evidence="1">Cell wall formation. Adds enolpyruvyl to UDP-N-acetylglucosamine.</text>
</comment>
<comment type="catalytic activity">
    <reaction evidence="1">
        <text>phosphoenolpyruvate + UDP-N-acetyl-alpha-D-glucosamine = UDP-N-acetyl-3-O-(1-carboxyvinyl)-alpha-D-glucosamine + phosphate</text>
        <dbReference type="Rhea" id="RHEA:18681"/>
        <dbReference type="ChEBI" id="CHEBI:43474"/>
        <dbReference type="ChEBI" id="CHEBI:57705"/>
        <dbReference type="ChEBI" id="CHEBI:58702"/>
        <dbReference type="ChEBI" id="CHEBI:68483"/>
        <dbReference type="EC" id="2.5.1.7"/>
    </reaction>
</comment>
<comment type="pathway">
    <text evidence="1">Cell wall biogenesis; peptidoglycan biosynthesis.</text>
</comment>
<comment type="subcellular location">
    <subcellularLocation>
        <location evidence="1">Cytoplasm</location>
    </subcellularLocation>
</comment>
<comment type="similarity">
    <text evidence="1">Belongs to the EPSP synthase family. MurA subfamily.</text>
</comment>